<comment type="function">
    <text evidence="1">Binds RpoD and negatively regulates RpoD-mediated transcription activation by preventing the interaction between the primary sigma factor RpoD with the catalytic core of the RNA polymerase and with promoter DNA. May be involved in replacement of the RNA polymerase sigma subunit from RpoD to RpoS during the transition from exponential growth to the stationary phase.</text>
</comment>
<comment type="subunit">
    <text evidence="1">Interacts with RpoD.</text>
</comment>
<comment type="subcellular location">
    <subcellularLocation>
        <location evidence="1">Cytoplasm</location>
    </subcellularLocation>
</comment>
<comment type="similarity">
    <text evidence="1">Belongs to the Rsd/AlgQ family.</text>
</comment>
<proteinExistence type="inferred from homology"/>
<accession>B7MRC1</accession>
<evidence type="ECO:0000255" key="1">
    <source>
        <dbReference type="HAMAP-Rule" id="MF_01181"/>
    </source>
</evidence>
<dbReference type="EMBL" id="CU928162">
    <property type="protein sequence ID" value="CAR10809.2"/>
    <property type="molecule type" value="Genomic_DNA"/>
</dbReference>
<dbReference type="RefSeq" id="WP_000934300.1">
    <property type="nucleotide sequence ID" value="NC_011745.1"/>
</dbReference>
<dbReference type="SMR" id="B7MRC1"/>
<dbReference type="KEGG" id="ecq:ECED1_4702"/>
<dbReference type="HOGENOM" id="CLU_142729_0_0_6"/>
<dbReference type="Proteomes" id="UP000000748">
    <property type="component" value="Chromosome"/>
</dbReference>
<dbReference type="GO" id="GO:0005737">
    <property type="term" value="C:cytoplasm"/>
    <property type="evidence" value="ECO:0007669"/>
    <property type="project" value="UniProtKB-SubCell"/>
</dbReference>
<dbReference type="GO" id="GO:0006355">
    <property type="term" value="P:regulation of DNA-templated transcription"/>
    <property type="evidence" value="ECO:0007669"/>
    <property type="project" value="InterPro"/>
</dbReference>
<dbReference type="FunFam" id="1.20.120.1370:FF:000001">
    <property type="entry name" value="Regulator of sigma D"/>
    <property type="match status" value="1"/>
</dbReference>
<dbReference type="Gene3D" id="1.20.120.1370">
    <property type="entry name" value="Regulator of RNA polymerase sigma(70) subunit, domain 4"/>
    <property type="match status" value="1"/>
</dbReference>
<dbReference type="HAMAP" id="MF_01181">
    <property type="entry name" value="Rsd"/>
    <property type="match status" value="1"/>
</dbReference>
<dbReference type="InterPro" id="IPR038309">
    <property type="entry name" value="Rsd/AlgQ_sf"/>
</dbReference>
<dbReference type="InterPro" id="IPR023785">
    <property type="entry name" value="Sigma70_reg_Rsd"/>
</dbReference>
<dbReference type="InterPro" id="IPR007448">
    <property type="entry name" value="Sigma70_reg_Rsd_AlgQ"/>
</dbReference>
<dbReference type="NCBIfam" id="NF008723">
    <property type="entry name" value="PRK11718.1"/>
    <property type="match status" value="1"/>
</dbReference>
<dbReference type="Pfam" id="PF04353">
    <property type="entry name" value="Rsd_AlgQ"/>
    <property type="match status" value="1"/>
</dbReference>
<dbReference type="PIRSF" id="PIRSF016548">
    <property type="entry name" value="Rsd_AlgQ"/>
    <property type="match status" value="1"/>
</dbReference>
<gene>
    <name evidence="1" type="primary">rsd</name>
    <name type="ordered locus">ECED1_4702</name>
</gene>
<keyword id="KW-0963">Cytoplasm</keyword>
<keyword id="KW-0804">Transcription</keyword>
<keyword id="KW-0805">Transcription regulation</keyword>
<feature type="chain" id="PRO_1000164437" description="Regulator of sigma D">
    <location>
        <begin position="1"/>
        <end position="158"/>
    </location>
</feature>
<sequence length="158" mass="18221">MLNQLDNLTERVRGSNKLVDRWLHVRKHLLVAYYNLVGIKPGKESYMRLNEKALDDFCQSLVDYLSAGHFSIYERILHKLEGNGQLARAAKIWPQLEANTQQIMDDYDSSLETAIDHDNYLEFQQVLSDIGEALEARFVLEDKLILLVLDAARVKYPA</sequence>
<protein>
    <recommendedName>
        <fullName evidence="1">Regulator of sigma D</fullName>
    </recommendedName>
</protein>
<reference key="1">
    <citation type="journal article" date="2009" name="PLoS Genet.">
        <title>Organised genome dynamics in the Escherichia coli species results in highly diverse adaptive paths.</title>
        <authorList>
            <person name="Touchon M."/>
            <person name="Hoede C."/>
            <person name="Tenaillon O."/>
            <person name="Barbe V."/>
            <person name="Baeriswyl S."/>
            <person name="Bidet P."/>
            <person name="Bingen E."/>
            <person name="Bonacorsi S."/>
            <person name="Bouchier C."/>
            <person name="Bouvet O."/>
            <person name="Calteau A."/>
            <person name="Chiapello H."/>
            <person name="Clermont O."/>
            <person name="Cruveiller S."/>
            <person name="Danchin A."/>
            <person name="Diard M."/>
            <person name="Dossat C."/>
            <person name="Karoui M.E."/>
            <person name="Frapy E."/>
            <person name="Garry L."/>
            <person name="Ghigo J.M."/>
            <person name="Gilles A.M."/>
            <person name="Johnson J."/>
            <person name="Le Bouguenec C."/>
            <person name="Lescat M."/>
            <person name="Mangenot S."/>
            <person name="Martinez-Jehanne V."/>
            <person name="Matic I."/>
            <person name="Nassif X."/>
            <person name="Oztas S."/>
            <person name="Petit M.A."/>
            <person name="Pichon C."/>
            <person name="Rouy Z."/>
            <person name="Ruf C.S."/>
            <person name="Schneider D."/>
            <person name="Tourret J."/>
            <person name="Vacherie B."/>
            <person name="Vallenet D."/>
            <person name="Medigue C."/>
            <person name="Rocha E.P.C."/>
            <person name="Denamur E."/>
        </authorList>
    </citation>
    <scope>NUCLEOTIDE SEQUENCE [LARGE SCALE GENOMIC DNA]</scope>
    <source>
        <strain>ED1a</strain>
    </source>
</reference>
<name>RSD_ECO81</name>
<organism>
    <name type="scientific">Escherichia coli O81 (strain ED1a)</name>
    <dbReference type="NCBI Taxonomy" id="585397"/>
    <lineage>
        <taxon>Bacteria</taxon>
        <taxon>Pseudomonadati</taxon>
        <taxon>Pseudomonadota</taxon>
        <taxon>Gammaproteobacteria</taxon>
        <taxon>Enterobacterales</taxon>
        <taxon>Enterobacteriaceae</taxon>
        <taxon>Escherichia</taxon>
    </lineage>
</organism>